<dbReference type="EC" id="3.1.26.4" evidence="1"/>
<dbReference type="EMBL" id="CP000800">
    <property type="protein sequence ID" value="ABV17831.1"/>
    <property type="molecule type" value="Genomic_DNA"/>
</dbReference>
<dbReference type="RefSeq" id="WP_000917883.1">
    <property type="nucleotide sequence ID" value="NC_009801.1"/>
</dbReference>
<dbReference type="BMRB" id="A7ZHV1"/>
<dbReference type="SMR" id="A7ZHV1"/>
<dbReference type="GeneID" id="93777209"/>
<dbReference type="KEGG" id="ecw:EcE24377A_0219"/>
<dbReference type="HOGENOM" id="CLU_030894_6_0_6"/>
<dbReference type="EvolutionaryTrace" id="A7ZHV1"/>
<dbReference type="Proteomes" id="UP000001122">
    <property type="component" value="Chromosome"/>
</dbReference>
<dbReference type="GO" id="GO:0005737">
    <property type="term" value="C:cytoplasm"/>
    <property type="evidence" value="ECO:0007669"/>
    <property type="project" value="UniProtKB-SubCell"/>
</dbReference>
<dbReference type="GO" id="GO:0000287">
    <property type="term" value="F:magnesium ion binding"/>
    <property type="evidence" value="ECO:0007669"/>
    <property type="project" value="UniProtKB-UniRule"/>
</dbReference>
<dbReference type="GO" id="GO:0003676">
    <property type="term" value="F:nucleic acid binding"/>
    <property type="evidence" value="ECO:0007669"/>
    <property type="project" value="InterPro"/>
</dbReference>
<dbReference type="GO" id="GO:0004523">
    <property type="term" value="F:RNA-DNA hybrid ribonuclease activity"/>
    <property type="evidence" value="ECO:0007669"/>
    <property type="project" value="UniProtKB-UniRule"/>
</dbReference>
<dbReference type="GO" id="GO:0043137">
    <property type="term" value="P:DNA replication, removal of RNA primer"/>
    <property type="evidence" value="ECO:0007669"/>
    <property type="project" value="TreeGrafter"/>
</dbReference>
<dbReference type="CDD" id="cd09278">
    <property type="entry name" value="RNase_HI_prokaryote_like"/>
    <property type="match status" value="1"/>
</dbReference>
<dbReference type="FunFam" id="3.30.420.10:FF:000008">
    <property type="entry name" value="Ribonuclease H"/>
    <property type="match status" value="1"/>
</dbReference>
<dbReference type="Gene3D" id="3.30.420.10">
    <property type="entry name" value="Ribonuclease H-like superfamily/Ribonuclease H"/>
    <property type="match status" value="1"/>
</dbReference>
<dbReference type="HAMAP" id="MF_00042">
    <property type="entry name" value="RNase_H"/>
    <property type="match status" value="1"/>
</dbReference>
<dbReference type="InterPro" id="IPR050092">
    <property type="entry name" value="RNase_H"/>
</dbReference>
<dbReference type="InterPro" id="IPR012337">
    <property type="entry name" value="RNaseH-like_sf"/>
</dbReference>
<dbReference type="InterPro" id="IPR002156">
    <property type="entry name" value="RNaseH_domain"/>
</dbReference>
<dbReference type="InterPro" id="IPR036397">
    <property type="entry name" value="RNaseH_sf"/>
</dbReference>
<dbReference type="InterPro" id="IPR022892">
    <property type="entry name" value="RNaseHI"/>
</dbReference>
<dbReference type="NCBIfam" id="NF001236">
    <property type="entry name" value="PRK00203.1"/>
    <property type="match status" value="1"/>
</dbReference>
<dbReference type="PANTHER" id="PTHR10642">
    <property type="entry name" value="RIBONUCLEASE H1"/>
    <property type="match status" value="1"/>
</dbReference>
<dbReference type="PANTHER" id="PTHR10642:SF26">
    <property type="entry name" value="RIBONUCLEASE H1"/>
    <property type="match status" value="1"/>
</dbReference>
<dbReference type="Pfam" id="PF00075">
    <property type="entry name" value="RNase_H"/>
    <property type="match status" value="1"/>
</dbReference>
<dbReference type="SUPFAM" id="SSF53098">
    <property type="entry name" value="Ribonuclease H-like"/>
    <property type="match status" value="1"/>
</dbReference>
<dbReference type="PROSITE" id="PS50879">
    <property type="entry name" value="RNASE_H_1"/>
    <property type="match status" value="1"/>
</dbReference>
<accession>A7ZHV1</accession>
<proteinExistence type="inferred from homology"/>
<organism>
    <name type="scientific">Escherichia coli O139:H28 (strain E24377A / ETEC)</name>
    <dbReference type="NCBI Taxonomy" id="331111"/>
    <lineage>
        <taxon>Bacteria</taxon>
        <taxon>Pseudomonadati</taxon>
        <taxon>Pseudomonadota</taxon>
        <taxon>Gammaproteobacteria</taxon>
        <taxon>Enterobacterales</taxon>
        <taxon>Enterobacteriaceae</taxon>
        <taxon>Escherichia</taxon>
    </lineage>
</organism>
<comment type="function">
    <text evidence="1">Endonuclease that specifically degrades the RNA of RNA-DNA hybrids.</text>
</comment>
<comment type="catalytic activity">
    <reaction evidence="1">
        <text>Endonucleolytic cleavage to 5'-phosphomonoester.</text>
        <dbReference type="EC" id="3.1.26.4"/>
    </reaction>
</comment>
<comment type="cofactor">
    <cofactor evidence="1">
        <name>Mg(2+)</name>
        <dbReference type="ChEBI" id="CHEBI:18420"/>
    </cofactor>
    <text evidence="1">Binds 1 Mg(2+) ion per subunit. May bind a second metal ion at a regulatory site, or after substrate binding.</text>
</comment>
<comment type="subunit">
    <text evidence="1">Monomer.</text>
</comment>
<comment type="subcellular location">
    <subcellularLocation>
        <location evidence="1">Cytoplasm</location>
    </subcellularLocation>
</comment>
<comment type="similarity">
    <text evidence="1">Belongs to the RNase H family.</text>
</comment>
<evidence type="ECO:0000255" key="1">
    <source>
        <dbReference type="HAMAP-Rule" id="MF_00042"/>
    </source>
</evidence>
<evidence type="ECO:0000255" key="2">
    <source>
        <dbReference type="PROSITE-ProRule" id="PRU00408"/>
    </source>
</evidence>
<feature type="chain" id="PRO_1000074640" description="Ribonuclease H">
    <location>
        <begin position="1"/>
        <end position="155"/>
    </location>
</feature>
<feature type="domain" description="RNase H type-1" evidence="2">
    <location>
        <begin position="1"/>
        <end position="142"/>
    </location>
</feature>
<feature type="binding site" evidence="1">
    <location>
        <position position="10"/>
    </location>
    <ligand>
        <name>Mg(2+)</name>
        <dbReference type="ChEBI" id="CHEBI:18420"/>
        <label>1</label>
    </ligand>
</feature>
<feature type="binding site" evidence="1">
    <location>
        <position position="10"/>
    </location>
    <ligand>
        <name>Mg(2+)</name>
        <dbReference type="ChEBI" id="CHEBI:18420"/>
        <label>2</label>
    </ligand>
</feature>
<feature type="binding site" evidence="1">
    <location>
        <position position="48"/>
    </location>
    <ligand>
        <name>Mg(2+)</name>
        <dbReference type="ChEBI" id="CHEBI:18420"/>
        <label>1</label>
    </ligand>
</feature>
<feature type="binding site" evidence="1">
    <location>
        <position position="70"/>
    </location>
    <ligand>
        <name>Mg(2+)</name>
        <dbReference type="ChEBI" id="CHEBI:18420"/>
        <label>1</label>
    </ligand>
</feature>
<feature type="binding site" evidence="1">
    <location>
        <position position="134"/>
    </location>
    <ligand>
        <name>Mg(2+)</name>
        <dbReference type="ChEBI" id="CHEBI:18420"/>
        <label>2</label>
    </ligand>
</feature>
<name>RNH_ECO24</name>
<sequence>MLKQVEIFTDGSCLGNPGPGGYGAILRYRGREKTFSAGYTRTTNNRMELMAAIVALEALKEHCEVILSTDSQYVRQGITQWIHNWKKRGWKTADKKPVKNVDLWQRLDAALGQHQIKWEWVKGHAGHPENERCDELARAAAMNPTLEDTGYQVEV</sequence>
<gene>
    <name evidence="1" type="primary">rnhA</name>
    <name type="ordered locus">EcE24377A_0219</name>
</gene>
<reference key="1">
    <citation type="journal article" date="2008" name="J. Bacteriol.">
        <title>The pangenome structure of Escherichia coli: comparative genomic analysis of E. coli commensal and pathogenic isolates.</title>
        <authorList>
            <person name="Rasko D.A."/>
            <person name="Rosovitz M.J."/>
            <person name="Myers G.S.A."/>
            <person name="Mongodin E.F."/>
            <person name="Fricke W.F."/>
            <person name="Gajer P."/>
            <person name="Crabtree J."/>
            <person name="Sebaihia M."/>
            <person name="Thomson N.R."/>
            <person name="Chaudhuri R."/>
            <person name="Henderson I.R."/>
            <person name="Sperandio V."/>
            <person name="Ravel J."/>
        </authorList>
    </citation>
    <scope>NUCLEOTIDE SEQUENCE [LARGE SCALE GENOMIC DNA]</scope>
    <source>
        <strain>E24377A / ETEC</strain>
    </source>
</reference>
<keyword id="KW-0963">Cytoplasm</keyword>
<keyword id="KW-0255">Endonuclease</keyword>
<keyword id="KW-0378">Hydrolase</keyword>
<keyword id="KW-0460">Magnesium</keyword>
<keyword id="KW-0479">Metal-binding</keyword>
<keyword id="KW-0540">Nuclease</keyword>
<keyword id="KW-1185">Reference proteome</keyword>
<protein>
    <recommendedName>
        <fullName evidence="1">Ribonuclease H</fullName>
        <shortName evidence="1">RNase H</shortName>
        <ecNumber evidence="1">3.1.26.4</ecNumber>
    </recommendedName>
</protein>